<organism>
    <name type="scientific">Arabidopsis thaliana</name>
    <name type="common">Mouse-ear cress</name>
    <dbReference type="NCBI Taxonomy" id="3702"/>
    <lineage>
        <taxon>Eukaryota</taxon>
        <taxon>Viridiplantae</taxon>
        <taxon>Streptophyta</taxon>
        <taxon>Embryophyta</taxon>
        <taxon>Tracheophyta</taxon>
        <taxon>Spermatophyta</taxon>
        <taxon>Magnoliopsida</taxon>
        <taxon>eudicotyledons</taxon>
        <taxon>Gunneridae</taxon>
        <taxon>Pentapetalae</taxon>
        <taxon>rosids</taxon>
        <taxon>malvids</taxon>
        <taxon>Brassicales</taxon>
        <taxon>Brassicaceae</taxon>
        <taxon>Camelineae</taxon>
        <taxon>Arabidopsis</taxon>
    </lineage>
</organism>
<accession>Q8S9M3</accession>
<accession>F4IG65</accession>
<accession>O22125</accession>
<accession>Q8S8T9</accession>
<name>GRF9_ARATH</name>
<feature type="chain" id="PRO_0000419300" description="Growth-regulating factor 9">
    <location>
        <begin position="1"/>
        <end position="431"/>
    </location>
</feature>
<feature type="domain" description="QLQ" evidence="1">
    <location>
        <begin position="24"/>
        <end position="59"/>
    </location>
</feature>
<feature type="domain" description="WRC 1" evidence="2">
    <location>
        <begin position="89"/>
        <end position="133"/>
    </location>
</feature>
<feature type="domain" description="WRC 2" evidence="2">
    <location>
        <begin position="307"/>
        <end position="351"/>
    </location>
</feature>
<feature type="short sequence motif" description="Bipartite nuclear localization signal" evidence="2">
    <location>
        <begin position="94"/>
        <end position="104"/>
    </location>
</feature>
<feature type="short sequence motif" description="Bipartite nuclear localization signal" evidence="2">
    <location>
        <begin position="122"/>
        <end position="129"/>
    </location>
</feature>
<feature type="short sequence motif" description="Bipartite nuclear localization signal" evidence="2">
    <location>
        <begin position="312"/>
        <end position="322"/>
    </location>
</feature>
<feature type="short sequence motif" description="Bipartite nuclear localization signal" evidence="2">
    <location>
        <begin position="340"/>
        <end position="345"/>
    </location>
</feature>
<comment type="function">
    <text evidence="7">Transcription activator that plays a role in the regulation of cell expansion in leaf and cotyledons tissues. Component of a network formed by miR396, the GRFs and their interacting factors (GIFs) acting in the regulation of meristem function, at least partially through the control of cell proliferation.</text>
</comment>
<comment type="subunit">
    <text evidence="4">Interacts with GIF1.</text>
</comment>
<comment type="interaction">
    <interactant intactId="EBI-1396638">
        <id>Q8S9M3</id>
    </interactant>
    <interactant intactId="EBI-1396623">
        <id>Q8L8A5</id>
        <label>GIF1</label>
    </interactant>
    <organismsDiffer>false</organismsDiffer>
    <experiments>4</experiments>
</comment>
<comment type="interaction">
    <interactant intactId="EBI-1396638">
        <id>Q8S9M3</id>
    </interactant>
    <interactant intactId="EBI-1396863">
        <id>Q9MAL9</id>
        <label>GIF2</label>
    </interactant>
    <organismsDiffer>false</organismsDiffer>
    <experiments>3</experiments>
</comment>
<comment type="interaction">
    <interactant intactId="EBI-1396638">
        <id>Q8S9M3</id>
    </interactant>
    <interactant intactId="EBI-15194507">
        <id>Q93VH6</id>
        <label>GIF3</label>
    </interactant>
    <organismsDiffer>false</organismsDiffer>
    <experiments>3</experiments>
</comment>
<comment type="subcellular location">
    <subcellularLocation>
        <location evidence="2">Nucleus</location>
    </subcellularLocation>
</comment>
<comment type="tissue specificity">
    <text evidence="4 7">Detected in the shoot apical meristem (SAM) and in young leaf primordium.</text>
</comment>
<comment type="developmental stage">
    <text evidence="6">Expressed during the early stages of leaf development and expression decreases with the maturation of the leaf.</text>
</comment>
<comment type="induction">
    <text evidence="3 5 6">microRNA 396 (miR396a or miR396b) negatively regulates growth-regulating factors (GRF1-4 and GRF7-9).</text>
</comment>
<comment type="domain">
    <text>The QLQ domain and WRC domain may be involved in protein-protein interaction and DNA-binding, respectively.</text>
</comment>
<comment type="similarity">
    <text evidence="8">Belongs to the GRF family.</text>
</comment>
<comment type="sequence caution" evidence="8">
    <conflict type="erroneous initiation">
        <sequence resource="EMBL-CDS" id="AAM14831"/>
    </conflict>
    <text>Truncated N-terminus.</text>
</comment>
<comment type="sequence caution" evidence="8">
    <conflict type="erroneous initiation">
        <sequence resource="EMBL-CDS" id="AEC10560"/>
    </conflict>
    <text>Truncated N-terminus.</text>
</comment>
<proteinExistence type="evidence at protein level"/>
<reference key="1">
    <citation type="journal article" date="1999" name="Nature">
        <title>Sequence and analysis of chromosome 2 of the plant Arabidopsis thaliana.</title>
        <authorList>
            <person name="Lin X."/>
            <person name="Kaul S."/>
            <person name="Rounsley S.D."/>
            <person name="Shea T.P."/>
            <person name="Benito M.-I."/>
            <person name="Town C.D."/>
            <person name="Fujii C.Y."/>
            <person name="Mason T.M."/>
            <person name="Bowman C.L."/>
            <person name="Barnstead M.E."/>
            <person name="Feldblyum T.V."/>
            <person name="Buell C.R."/>
            <person name="Ketchum K.A."/>
            <person name="Lee J.J."/>
            <person name="Ronning C.M."/>
            <person name="Koo H.L."/>
            <person name="Moffat K.S."/>
            <person name="Cronin L.A."/>
            <person name="Shen M."/>
            <person name="Pai G."/>
            <person name="Van Aken S."/>
            <person name="Umayam L."/>
            <person name="Tallon L.J."/>
            <person name="Gill J.E."/>
            <person name="Adams M.D."/>
            <person name="Carrera A.J."/>
            <person name="Creasy T.H."/>
            <person name="Goodman H.M."/>
            <person name="Somerville C.R."/>
            <person name="Copenhaver G.P."/>
            <person name="Preuss D."/>
            <person name="Nierman W.C."/>
            <person name="White O."/>
            <person name="Eisen J.A."/>
            <person name="Salzberg S.L."/>
            <person name="Fraser C.M."/>
            <person name="Venter J.C."/>
        </authorList>
    </citation>
    <scope>NUCLEOTIDE SEQUENCE [LARGE SCALE GENOMIC DNA]</scope>
    <source>
        <strain>cv. Columbia</strain>
    </source>
</reference>
<reference key="2">
    <citation type="journal article" date="2017" name="Plant J.">
        <title>Araport11: a complete reannotation of the Arabidopsis thaliana reference genome.</title>
        <authorList>
            <person name="Cheng C.Y."/>
            <person name="Krishnakumar V."/>
            <person name="Chan A.P."/>
            <person name="Thibaud-Nissen F."/>
            <person name="Schobel S."/>
            <person name="Town C.D."/>
        </authorList>
    </citation>
    <scope>GENOME REANNOTATION</scope>
    <source>
        <strain>cv. Columbia</strain>
    </source>
</reference>
<reference key="3">
    <citation type="journal article" date="2003" name="Science">
        <title>Empirical analysis of transcriptional activity in the Arabidopsis genome.</title>
        <authorList>
            <person name="Yamada K."/>
            <person name="Lim J."/>
            <person name="Dale J.M."/>
            <person name="Chen H."/>
            <person name="Shinn P."/>
            <person name="Palm C.J."/>
            <person name="Southwick A.M."/>
            <person name="Wu H.C."/>
            <person name="Kim C.J."/>
            <person name="Nguyen M."/>
            <person name="Pham P.K."/>
            <person name="Cheuk R.F."/>
            <person name="Karlin-Newmann G."/>
            <person name="Liu S.X."/>
            <person name="Lam B."/>
            <person name="Sakano H."/>
            <person name="Wu T."/>
            <person name="Yu G."/>
            <person name="Miranda M."/>
            <person name="Quach H.L."/>
            <person name="Tripp M."/>
            <person name="Chang C.H."/>
            <person name="Lee J.M."/>
            <person name="Toriumi M.J."/>
            <person name="Chan M.M."/>
            <person name="Tang C.C."/>
            <person name="Onodera C.S."/>
            <person name="Deng J.M."/>
            <person name="Akiyama K."/>
            <person name="Ansari Y."/>
            <person name="Arakawa T."/>
            <person name="Banh J."/>
            <person name="Banno F."/>
            <person name="Bowser L."/>
            <person name="Brooks S.Y."/>
            <person name="Carninci P."/>
            <person name="Chao Q."/>
            <person name="Choy N."/>
            <person name="Enju A."/>
            <person name="Goldsmith A.D."/>
            <person name="Gurjal M."/>
            <person name="Hansen N.F."/>
            <person name="Hayashizaki Y."/>
            <person name="Johnson-Hopson C."/>
            <person name="Hsuan V.W."/>
            <person name="Iida K."/>
            <person name="Karnes M."/>
            <person name="Khan S."/>
            <person name="Koesema E."/>
            <person name="Ishida J."/>
            <person name="Jiang P.X."/>
            <person name="Jones T."/>
            <person name="Kawai J."/>
            <person name="Kamiya A."/>
            <person name="Meyers C."/>
            <person name="Nakajima M."/>
            <person name="Narusaka M."/>
            <person name="Seki M."/>
            <person name="Sakurai T."/>
            <person name="Satou M."/>
            <person name="Tamse R."/>
            <person name="Vaysberg M."/>
            <person name="Wallender E.K."/>
            <person name="Wong C."/>
            <person name="Yamamura Y."/>
            <person name="Yuan S."/>
            <person name="Shinozaki K."/>
            <person name="Davis R.W."/>
            <person name="Theologis A."/>
            <person name="Ecker J.R."/>
        </authorList>
    </citation>
    <scope>NUCLEOTIDE SEQUENCE [LARGE SCALE MRNA]</scope>
    <source>
        <strain>cv. Columbia</strain>
    </source>
</reference>
<reference key="4">
    <citation type="submission" date="2009-03" db="EMBL/GenBank/DDBJ databases">
        <title>ORF cloning and analysis of Arabidopsis transcription factor genes.</title>
        <authorList>
            <person name="Fujita M."/>
            <person name="Mizukado S."/>
            <person name="Seki M."/>
            <person name="Shinozaki K."/>
            <person name="Mitsuda N."/>
            <person name="Takiguchi Y."/>
            <person name="Takagi M."/>
        </authorList>
    </citation>
    <scope>NUCLEOTIDE SEQUENCE [LARGE SCALE MRNA]</scope>
</reference>
<reference key="5">
    <citation type="journal article" date="2003" name="Plant J.">
        <title>The AtGRF family of putative transcription factors is involved in leaf and cotyledon growth in Arabidopsis.</title>
        <authorList>
            <person name="Kim J.H."/>
            <person name="Choi D."/>
            <person name="Kende H."/>
        </authorList>
    </citation>
    <scope>GENE FAMILY</scope>
    <scope>NOMENCLATURE</scope>
</reference>
<reference key="6">
    <citation type="journal article" date="2004" name="Mol. Cell">
        <title>Computational identification of plant microRNAs and their targets, including a stress-induced miRNA.</title>
        <authorList>
            <person name="Jones-Rhoades M.W."/>
            <person name="Bartel D.P."/>
        </authorList>
    </citation>
    <scope>INDUCTION</scope>
</reference>
<reference key="7">
    <citation type="journal article" date="2005" name="Plant J.">
        <title>The transcription factor AtGRF5 and the transcription coactivator AN3 regulate cell proliferation in leaf primordia of Arabidopsis thaliana.</title>
        <authorList>
            <person name="Horiguchi G."/>
            <person name="Kim G.T."/>
            <person name="Tsukaya H."/>
        </authorList>
    </citation>
    <scope>TISSUE SPECIFICITY</scope>
    <scope>INTERACTION WITH GIF1</scope>
</reference>
<reference key="8">
    <citation type="journal article" date="2009" name="Physiol. Plantarum">
        <title>Ectopic expression of miR396 suppresses GRF target gene expression and alters leaf growth in Arabidopsis.</title>
        <authorList>
            <person name="Liu D."/>
            <person name="Song Y."/>
            <person name="Chen Z."/>
            <person name="Yu D."/>
        </authorList>
    </citation>
    <scope>INDUCTION</scope>
</reference>
<reference key="9">
    <citation type="journal article" date="2010" name="Development">
        <title>Control of cell proliferation in Arabidopsis thaliana by microRNA miR396.</title>
        <authorList>
            <person name="Rodriguez R.E."/>
            <person name="Mecchia M.A."/>
            <person name="Debernardi J.M."/>
            <person name="Schommer C."/>
            <person name="Weigel D."/>
            <person name="Palatnik J.F."/>
        </authorList>
    </citation>
    <scope>DEVELOPMENTAL STAGE</scope>
    <scope>INDUCTION</scope>
</reference>
<reference key="10">
    <citation type="journal article" date="2011" name="J. Exp. Bot.">
        <title>miR396-targeted AtGRF transcription factors are required for coordination of cell division and differentiation during leaf development in Arabidopsis.</title>
        <authorList>
            <person name="Wang L."/>
            <person name="Gu X."/>
            <person name="Xu D."/>
            <person name="Wang W."/>
            <person name="Wang H."/>
            <person name="Zeng M."/>
            <person name="Chang Z."/>
            <person name="Huang H."/>
            <person name="Cui X."/>
        </authorList>
    </citation>
    <scope>FUNCTION</scope>
    <scope>TISSUE SPECIFICITY</scope>
</reference>
<gene>
    <name type="primary">GRF9</name>
    <name type="ordered locus">At2g45480</name>
    <name type="ORF">F17K2.27</name>
    <name type="ORF">F4L23.1</name>
</gene>
<evidence type="ECO:0000255" key="1">
    <source>
        <dbReference type="PROSITE-ProRule" id="PRU01001"/>
    </source>
</evidence>
<evidence type="ECO:0000255" key="2">
    <source>
        <dbReference type="PROSITE-ProRule" id="PRU01002"/>
    </source>
</evidence>
<evidence type="ECO:0000269" key="3">
    <source>
    </source>
</evidence>
<evidence type="ECO:0000269" key="4">
    <source>
    </source>
</evidence>
<evidence type="ECO:0000269" key="5">
    <source>
    </source>
</evidence>
<evidence type="ECO:0000269" key="6">
    <source>
    </source>
</evidence>
<evidence type="ECO:0000269" key="7">
    <source>
    </source>
</evidence>
<evidence type="ECO:0000305" key="8"/>
<dbReference type="EMBL" id="AC002387">
    <property type="protein sequence ID" value="AAM14831.1"/>
    <property type="status" value="ALT_INIT"/>
    <property type="molecule type" value="Genomic_DNA"/>
</dbReference>
<dbReference type="EMBL" id="AC003680">
    <property type="protein sequence ID" value="AAF18607.2"/>
    <property type="molecule type" value="Genomic_DNA"/>
</dbReference>
<dbReference type="EMBL" id="CP002685">
    <property type="protein sequence ID" value="AEC10560.1"/>
    <property type="status" value="ALT_INIT"/>
    <property type="molecule type" value="Genomic_DNA"/>
</dbReference>
<dbReference type="EMBL" id="CP002685">
    <property type="protein sequence ID" value="ANM61817.1"/>
    <property type="molecule type" value="Genomic_DNA"/>
</dbReference>
<dbReference type="EMBL" id="AY074647">
    <property type="protein sequence ID" value="AAL69463.1"/>
    <property type="molecule type" value="mRNA"/>
</dbReference>
<dbReference type="EMBL" id="AB493593">
    <property type="protein sequence ID" value="BAH30431.1"/>
    <property type="molecule type" value="mRNA"/>
</dbReference>
<dbReference type="PIR" id="A84891">
    <property type="entry name" value="A84891"/>
</dbReference>
<dbReference type="PIR" id="T00861">
    <property type="entry name" value="T00861"/>
</dbReference>
<dbReference type="RefSeq" id="NP_001324014.1">
    <property type="nucleotide sequence ID" value="NM_001337134.1"/>
</dbReference>
<dbReference type="RefSeq" id="NP_850438.2">
    <property type="nucleotide sequence ID" value="NM_180107.3"/>
</dbReference>
<dbReference type="BioGRID" id="4492">
    <property type="interactions" value="5"/>
</dbReference>
<dbReference type="FunCoup" id="Q8S9M3">
    <property type="interactions" value="13"/>
</dbReference>
<dbReference type="IntAct" id="Q8S9M3">
    <property type="interactions" value="5"/>
</dbReference>
<dbReference type="STRING" id="3702.Q8S9M3"/>
<dbReference type="PaxDb" id="3702-AT2G45480.1"/>
<dbReference type="ProteomicsDB" id="247289"/>
<dbReference type="EnsemblPlants" id="AT2G45480.3">
    <property type="protein sequence ID" value="AT2G45480.3"/>
    <property type="gene ID" value="AT2G45480"/>
</dbReference>
<dbReference type="GeneID" id="819156"/>
<dbReference type="Gramene" id="AT2G45480.3">
    <property type="protein sequence ID" value="AT2G45480.3"/>
    <property type="gene ID" value="AT2G45480"/>
</dbReference>
<dbReference type="KEGG" id="ath:AT2G45480"/>
<dbReference type="Araport" id="AT2G45480"/>
<dbReference type="TAIR" id="AT2G45480">
    <property type="gene designation" value="GRF9"/>
</dbReference>
<dbReference type="eggNOG" id="ENOG502RD11">
    <property type="taxonomic scope" value="Eukaryota"/>
</dbReference>
<dbReference type="HOGENOM" id="CLU_038997_0_0_1"/>
<dbReference type="InParanoid" id="Q8S9M3"/>
<dbReference type="PhylomeDB" id="Q8S9M3"/>
<dbReference type="PRO" id="PR:Q8S9M3"/>
<dbReference type="Proteomes" id="UP000006548">
    <property type="component" value="Chromosome 2"/>
</dbReference>
<dbReference type="ExpressionAtlas" id="Q8S9M3">
    <property type="expression patterns" value="baseline and differential"/>
</dbReference>
<dbReference type="GO" id="GO:0005634">
    <property type="term" value="C:nucleus"/>
    <property type="evidence" value="ECO:0000250"/>
    <property type="project" value="TAIR"/>
</dbReference>
<dbReference type="GO" id="GO:0005524">
    <property type="term" value="F:ATP binding"/>
    <property type="evidence" value="ECO:0007669"/>
    <property type="project" value="InterPro"/>
</dbReference>
<dbReference type="GO" id="GO:0006351">
    <property type="term" value="P:DNA-templated transcription"/>
    <property type="evidence" value="ECO:0007669"/>
    <property type="project" value="InterPro"/>
</dbReference>
<dbReference type="GO" id="GO:0048366">
    <property type="term" value="P:leaf development"/>
    <property type="evidence" value="ECO:0000304"/>
    <property type="project" value="TAIR"/>
</dbReference>
<dbReference type="GO" id="GO:0006355">
    <property type="term" value="P:regulation of DNA-templated transcription"/>
    <property type="evidence" value="ECO:0007669"/>
    <property type="project" value="InterPro"/>
</dbReference>
<dbReference type="InterPro" id="IPR014978">
    <property type="entry name" value="Gln-Leu-Gln_QLQ"/>
</dbReference>
<dbReference type="InterPro" id="IPR031137">
    <property type="entry name" value="GRF"/>
</dbReference>
<dbReference type="InterPro" id="IPR014977">
    <property type="entry name" value="WRC_dom"/>
</dbReference>
<dbReference type="PANTHER" id="PTHR31602">
    <property type="entry name" value="GROWTH-REGULATING FACTOR 5"/>
    <property type="match status" value="1"/>
</dbReference>
<dbReference type="PANTHER" id="PTHR31602:SF8">
    <property type="entry name" value="GROWTH-REGULATING FACTOR 5"/>
    <property type="match status" value="1"/>
</dbReference>
<dbReference type="Pfam" id="PF08880">
    <property type="entry name" value="QLQ"/>
    <property type="match status" value="1"/>
</dbReference>
<dbReference type="Pfam" id="PF08879">
    <property type="entry name" value="WRC"/>
    <property type="match status" value="2"/>
</dbReference>
<dbReference type="SMART" id="SM00951">
    <property type="entry name" value="QLQ"/>
    <property type="match status" value="1"/>
</dbReference>
<dbReference type="PROSITE" id="PS51666">
    <property type="entry name" value="QLQ"/>
    <property type="match status" value="1"/>
</dbReference>
<dbReference type="PROSITE" id="PS51667">
    <property type="entry name" value="WRC"/>
    <property type="match status" value="2"/>
</dbReference>
<protein>
    <recommendedName>
        <fullName>Growth-regulating factor 9</fullName>
        <shortName>AtGRF9</shortName>
    </recommendedName>
    <alternativeName>
        <fullName>Transcription activator GRF9</fullName>
    </alternativeName>
</protein>
<sequence>MKMQSPKMEQEEVEEERMRNKWPWMKAAQLMEFRMQALVYRYIEAGLRVPHHLVVPIWNSLALSSSSNYNYHSSSLLSNKGVTHIDTLETEPTRCRRTDGKKWRCSNTVLLFEKYCERHMHRGRKRSRKLVESSSEVASSSTKYDNTYGLDRYNESQSHLHGTISGSSNAQVVTIASLPSARSCENVIRPSLVISEFTNKSVSHGRKNMEMSYDDFINEKEASMCVGVVPLQGDESKPSVQKFFPEVSDKCLEAAKFSSNRKNDIIARSREWKNMNVNGGLFHGIHFSPDTVLQERGCFRLQGVETDNEPGRCRRTDGKKWRCSKDVLSGQKYCDKHMHRGMKKKHPVDTTNSHENAGFSPLTVETAVRSVVPCKDGDDQKHSVSVMGITLPRVSDEKSTSSCSTDTTITDTALRGEDDDEEYLSLFSPGV</sequence>
<keyword id="KW-0010">Activator</keyword>
<keyword id="KW-0539">Nucleus</keyword>
<keyword id="KW-1185">Reference proteome</keyword>
<keyword id="KW-0677">Repeat</keyword>
<keyword id="KW-0804">Transcription</keyword>
<keyword id="KW-0805">Transcription regulation</keyword>